<protein>
    <recommendedName>
        <fullName evidence="1">Phosphoglucosamine mutase</fullName>
        <ecNumber evidence="1">5.4.2.10</ecNumber>
    </recommendedName>
</protein>
<keyword id="KW-0413">Isomerase</keyword>
<keyword id="KW-0460">Magnesium</keyword>
<keyword id="KW-0479">Metal-binding</keyword>
<keyword id="KW-0597">Phosphoprotein</keyword>
<accession>C0M9C4</accession>
<sequence>MGKYFGTDGVRGEANVELTPELAFKLGRFGGYVLSQHETERPRVFVARDTRISGEMLEAALIAGLLSVGIEVYKLGVLATPGVSYLVRTEKASAGVMISASHNPALDNGIKFFGSDGFKLADEQELEIEALLDAKEDLLPRPSAEGLGALVDYPEGLRKYERFLVTTGADLDGLKIALDTANGAASVSARNVFLDLNADITVIGEKPNGLNINDGIGSTHPEKLQDLVTETASDIGLAFDGDSDRLIAVDENGAIVDGDKIMFIIGKYLSEKGLLAKNTIVTTVMSNLGFHKALDSCGIHKKVTAVGDRYVVEEMRQFGYNLGGEQSGHVIIMDYNTTGDGQLTAVQLTKIMKETGKTLSELASEVTIYPQKLVNIRVDNSMKERAMEVPAIAEVIAQMEGEMAGNGRILVRPSGTEPLLRVMAEAPSNEEVDYYVDTIAAVVRAEIGLD</sequence>
<gene>
    <name evidence="1" type="primary">glmM</name>
    <name type="ordered locus">SEQ_1397</name>
</gene>
<comment type="function">
    <text evidence="1">Catalyzes the conversion of glucosamine-6-phosphate to glucosamine-1-phosphate.</text>
</comment>
<comment type="catalytic activity">
    <reaction evidence="1">
        <text>alpha-D-glucosamine 1-phosphate = D-glucosamine 6-phosphate</text>
        <dbReference type="Rhea" id="RHEA:23424"/>
        <dbReference type="ChEBI" id="CHEBI:58516"/>
        <dbReference type="ChEBI" id="CHEBI:58725"/>
        <dbReference type="EC" id="5.4.2.10"/>
    </reaction>
</comment>
<comment type="cofactor">
    <cofactor evidence="1">
        <name>Mg(2+)</name>
        <dbReference type="ChEBI" id="CHEBI:18420"/>
    </cofactor>
    <text evidence="1">Binds 1 Mg(2+) ion per subunit.</text>
</comment>
<comment type="PTM">
    <text evidence="1">Activated by phosphorylation.</text>
</comment>
<comment type="similarity">
    <text evidence="1">Belongs to the phosphohexose mutase family.</text>
</comment>
<evidence type="ECO:0000255" key="1">
    <source>
        <dbReference type="HAMAP-Rule" id="MF_01554"/>
    </source>
</evidence>
<reference key="1">
    <citation type="journal article" date="2009" name="PLoS Pathog.">
        <title>Genomic evidence for the evolution of Streptococcus equi: host restriction, increased virulence, and genetic exchange with human pathogens.</title>
        <authorList>
            <person name="Holden M.T.G."/>
            <person name="Heather Z."/>
            <person name="Paillot R."/>
            <person name="Steward K.F."/>
            <person name="Webb K."/>
            <person name="Ainslie F."/>
            <person name="Jourdan T."/>
            <person name="Bason N.C."/>
            <person name="Holroyd N.E."/>
            <person name="Mungall K."/>
            <person name="Quail M.A."/>
            <person name="Sanders M."/>
            <person name="Simmonds M."/>
            <person name="Willey D."/>
            <person name="Brooks K."/>
            <person name="Aanensen D.M."/>
            <person name="Spratt B.G."/>
            <person name="Jolley K.A."/>
            <person name="Maiden M.C.J."/>
            <person name="Kehoe M."/>
            <person name="Chanter N."/>
            <person name="Bentley S.D."/>
            <person name="Robinson C."/>
            <person name="Maskell D.J."/>
            <person name="Parkhill J."/>
            <person name="Waller A.S."/>
        </authorList>
    </citation>
    <scope>NUCLEOTIDE SEQUENCE [LARGE SCALE GENOMIC DNA]</scope>
    <source>
        <strain>4047</strain>
    </source>
</reference>
<proteinExistence type="inferred from homology"/>
<dbReference type="EC" id="5.4.2.10" evidence="1"/>
<dbReference type="EMBL" id="FM204883">
    <property type="protein sequence ID" value="CAW94242.1"/>
    <property type="molecule type" value="Genomic_DNA"/>
</dbReference>
<dbReference type="RefSeq" id="WP_012679719.1">
    <property type="nucleotide sequence ID" value="NC_012471.1"/>
</dbReference>
<dbReference type="SMR" id="C0M9C4"/>
<dbReference type="KEGG" id="seu:SEQ_1397"/>
<dbReference type="HOGENOM" id="CLU_016950_7_0_9"/>
<dbReference type="OrthoDB" id="9806956at2"/>
<dbReference type="Proteomes" id="UP000001365">
    <property type="component" value="Chromosome"/>
</dbReference>
<dbReference type="GO" id="GO:0005829">
    <property type="term" value="C:cytosol"/>
    <property type="evidence" value="ECO:0007669"/>
    <property type="project" value="TreeGrafter"/>
</dbReference>
<dbReference type="GO" id="GO:0000287">
    <property type="term" value="F:magnesium ion binding"/>
    <property type="evidence" value="ECO:0007669"/>
    <property type="project" value="UniProtKB-UniRule"/>
</dbReference>
<dbReference type="GO" id="GO:0008966">
    <property type="term" value="F:phosphoglucosamine mutase activity"/>
    <property type="evidence" value="ECO:0007669"/>
    <property type="project" value="UniProtKB-UniRule"/>
</dbReference>
<dbReference type="GO" id="GO:0004615">
    <property type="term" value="F:phosphomannomutase activity"/>
    <property type="evidence" value="ECO:0007669"/>
    <property type="project" value="TreeGrafter"/>
</dbReference>
<dbReference type="GO" id="GO:0005975">
    <property type="term" value="P:carbohydrate metabolic process"/>
    <property type="evidence" value="ECO:0007669"/>
    <property type="project" value="InterPro"/>
</dbReference>
<dbReference type="GO" id="GO:0009252">
    <property type="term" value="P:peptidoglycan biosynthetic process"/>
    <property type="evidence" value="ECO:0007669"/>
    <property type="project" value="TreeGrafter"/>
</dbReference>
<dbReference type="GO" id="GO:0006048">
    <property type="term" value="P:UDP-N-acetylglucosamine biosynthetic process"/>
    <property type="evidence" value="ECO:0007669"/>
    <property type="project" value="TreeGrafter"/>
</dbReference>
<dbReference type="CDD" id="cd05802">
    <property type="entry name" value="GlmM"/>
    <property type="match status" value="1"/>
</dbReference>
<dbReference type="FunFam" id="3.30.310.50:FF:000001">
    <property type="entry name" value="Phosphoglucosamine mutase"/>
    <property type="match status" value="1"/>
</dbReference>
<dbReference type="FunFam" id="3.40.120.10:FF:000001">
    <property type="entry name" value="Phosphoglucosamine mutase"/>
    <property type="match status" value="1"/>
</dbReference>
<dbReference type="FunFam" id="3.40.120.10:FF:000002">
    <property type="entry name" value="Phosphoglucosamine mutase"/>
    <property type="match status" value="1"/>
</dbReference>
<dbReference type="Gene3D" id="3.40.120.10">
    <property type="entry name" value="Alpha-D-Glucose-1,6-Bisphosphate, subunit A, domain 3"/>
    <property type="match status" value="3"/>
</dbReference>
<dbReference type="Gene3D" id="3.30.310.50">
    <property type="entry name" value="Alpha-D-phosphohexomutase, C-terminal domain"/>
    <property type="match status" value="1"/>
</dbReference>
<dbReference type="HAMAP" id="MF_01554_B">
    <property type="entry name" value="GlmM_B"/>
    <property type="match status" value="1"/>
</dbReference>
<dbReference type="InterPro" id="IPR005844">
    <property type="entry name" value="A-D-PHexomutase_a/b/a-I"/>
</dbReference>
<dbReference type="InterPro" id="IPR016055">
    <property type="entry name" value="A-D-PHexomutase_a/b/a-I/II/III"/>
</dbReference>
<dbReference type="InterPro" id="IPR005845">
    <property type="entry name" value="A-D-PHexomutase_a/b/a-II"/>
</dbReference>
<dbReference type="InterPro" id="IPR005846">
    <property type="entry name" value="A-D-PHexomutase_a/b/a-III"/>
</dbReference>
<dbReference type="InterPro" id="IPR005843">
    <property type="entry name" value="A-D-PHexomutase_C"/>
</dbReference>
<dbReference type="InterPro" id="IPR036900">
    <property type="entry name" value="A-D-PHexomutase_C_sf"/>
</dbReference>
<dbReference type="InterPro" id="IPR016066">
    <property type="entry name" value="A-D-PHexomutase_CS"/>
</dbReference>
<dbReference type="InterPro" id="IPR005841">
    <property type="entry name" value="Alpha-D-phosphohexomutase_SF"/>
</dbReference>
<dbReference type="InterPro" id="IPR006352">
    <property type="entry name" value="GlmM_bact"/>
</dbReference>
<dbReference type="InterPro" id="IPR050060">
    <property type="entry name" value="Phosphoglucosamine_mutase"/>
</dbReference>
<dbReference type="NCBIfam" id="TIGR01455">
    <property type="entry name" value="glmM"/>
    <property type="match status" value="1"/>
</dbReference>
<dbReference type="PANTHER" id="PTHR42946:SF1">
    <property type="entry name" value="PHOSPHOGLUCOMUTASE (ALPHA-D-GLUCOSE-1,6-BISPHOSPHATE-DEPENDENT)"/>
    <property type="match status" value="1"/>
</dbReference>
<dbReference type="PANTHER" id="PTHR42946">
    <property type="entry name" value="PHOSPHOHEXOSE MUTASE"/>
    <property type="match status" value="1"/>
</dbReference>
<dbReference type="Pfam" id="PF02878">
    <property type="entry name" value="PGM_PMM_I"/>
    <property type="match status" value="1"/>
</dbReference>
<dbReference type="Pfam" id="PF02879">
    <property type="entry name" value="PGM_PMM_II"/>
    <property type="match status" value="1"/>
</dbReference>
<dbReference type="Pfam" id="PF02880">
    <property type="entry name" value="PGM_PMM_III"/>
    <property type="match status" value="1"/>
</dbReference>
<dbReference type="Pfam" id="PF00408">
    <property type="entry name" value="PGM_PMM_IV"/>
    <property type="match status" value="1"/>
</dbReference>
<dbReference type="PRINTS" id="PR00509">
    <property type="entry name" value="PGMPMM"/>
</dbReference>
<dbReference type="SUPFAM" id="SSF55957">
    <property type="entry name" value="Phosphoglucomutase, C-terminal domain"/>
    <property type="match status" value="1"/>
</dbReference>
<dbReference type="SUPFAM" id="SSF53738">
    <property type="entry name" value="Phosphoglucomutase, first 3 domains"/>
    <property type="match status" value="3"/>
</dbReference>
<dbReference type="PROSITE" id="PS00710">
    <property type="entry name" value="PGM_PMM"/>
    <property type="match status" value="1"/>
</dbReference>
<name>GLMM_STRE4</name>
<feature type="chain" id="PRO_1000185383" description="Phosphoglucosamine mutase">
    <location>
        <begin position="1"/>
        <end position="450"/>
    </location>
</feature>
<feature type="active site" description="Phosphoserine intermediate" evidence="1">
    <location>
        <position position="101"/>
    </location>
</feature>
<feature type="binding site" description="via phosphate group" evidence="1">
    <location>
        <position position="101"/>
    </location>
    <ligand>
        <name>Mg(2+)</name>
        <dbReference type="ChEBI" id="CHEBI:18420"/>
    </ligand>
</feature>
<feature type="binding site" evidence="1">
    <location>
        <position position="240"/>
    </location>
    <ligand>
        <name>Mg(2+)</name>
        <dbReference type="ChEBI" id="CHEBI:18420"/>
    </ligand>
</feature>
<feature type="binding site" evidence="1">
    <location>
        <position position="242"/>
    </location>
    <ligand>
        <name>Mg(2+)</name>
        <dbReference type="ChEBI" id="CHEBI:18420"/>
    </ligand>
</feature>
<feature type="binding site" evidence="1">
    <location>
        <position position="244"/>
    </location>
    <ligand>
        <name>Mg(2+)</name>
        <dbReference type="ChEBI" id="CHEBI:18420"/>
    </ligand>
</feature>
<feature type="modified residue" description="Phosphoserine" evidence="1">
    <location>
        <position position="101"/>
    </location>
</feature>
<organism>
    <name type="scientific">Streptococcus equi subsp. equi (strain 4047)</name>
    <dbReference type="NCBI Taxonomy" id="553482"/>
    <lineage>
        <taxon>Bacteria</taxon>
        <taxon>Bacillati</taxon>
        <taxon>Bacillota</taxon>
        <taxon>Bacilli</taxon>
        <taxon>Lactobacillales</taxon>
        <taxon>Streptococcaceae</taxon>
        <taxon>Streptococcus</taxon>
    </lineage>
</organism>